<accession>P68093</accession>
<accession>P24961</accession>
<accession>Q9T3G9</accession>
<reference key="1">
    <citation type="journal article" date="1999" name="Mar. Mamm. Sci.">
        <title>Phylogenetic relationships among the delphinid cetaceans based on full cytochrome b sequences.</title>
        <authorList>
            <person name="LeDuc R.G."/>
            <person name="Perrin W.F."/>
            <person name="Dizon A.E."/>
        </authorList>
    </citation>
    <scope>NUCLEOTIDE SEQUENCE [GENOMIC DNA]</scope>
</reference>
<evidence type="ECO:0000250" key="1"/>
<evidence type="ECO:0000250" key="2">
    <source>
        <dbReference type="UniProtKB" id="P00157"/>
    </source>
</evidence>
<evidence type="ECO:0000255" key="3">
    <source>
        <dbReference type="PROSITE-ProRule" id="PRU00967"/>
    </source>
</evidence>
<evidence type="ECO:0000255" key="4">
    <source>
        <dbReference type="PROSITE-ProRule" id="PRU00968"/>
    </source>
</evidence>
<proteinExistence type="inferred from homology"/>
<comment type="function">
    <text evidence="2">Component of the ubiquinol-cytochrome c reductase complex (complex III or cytochrome b-c1 complex) that is part of the mitochondrial respiratory chain. The b-c1 complex mediates electron transfer from ubiquinol to cytochrome c. Contributes to the generation of a proton gradient across the mitochondrial membrane that is then used for ATP synthesis.</text>
</comment>
<comment type="cofactor">
    <cofactor evidence="2">
        <name>heme b</name>
        <dbReference type="ChEBI" id="CHEBI:60344"/>
    </cofactor>
    <text evidence="2">Binds 2 heme b groups non-covalently.</text>
</comment>
<comment type="subunit">
    <text evidence="2">The cytochrome bc1 complex contains 11 subunits: 3 respiratory subunits (MT-CYB, CYC1 and UQCRFS1), 2 core proteins (UQCRC1 and UQCRC2) and 6 low-molecular weight proteins (UQCRH/QCR6, UQCRB/QCR7, UQCRQ/QCR8, UQCR10/QCR9, UQCR11/QCR10 and a cleavage product of UQCRFS1). This cytochrome bc1 complex then forms a dimer.</text>
</comment>
<comment type="subcellular location">
    <subcellularLocation>
        <location evidence="2">Mitochondrion inner membrane</location>
        <topology evidence="2">Multi-pass membrane protein</topology>
    </subcellularLocation>
</comment>
<comment type="miscellaneous">
    <text evidence="1">Heme 1 (or BL or b562) is low-potential and absorbs at about 562 nm, and heme 2 (or BH or b566) is high-potential and absorbs at about 566 nm.</text>
</comment>
<comment type="similarity">
    <text evidence="3 4">Belongs to the cytochrome b family.</text>
</comment>
<comment type="caution">
    <text evidence="2">The full-length protein contains only eight transmembrane helices, not nine as predicted by bioinformatics tools.</text>
</comment>
<dbReference type="EMBL" id="AF084083">
    <property type="protein sequence ID" value="AAD54460.1"/>
    <property type="molecule type" value="Genomic_DNA"/>
</dbReference>
<dbReference type="SMR" id="P68093"/>
<dbReference type="GO" id="GO:0005743">
    <property type="term" value="C:mitochondrial inner membrane"/>
    <property type="evidence" value="ECO:0007669"/>
    <property type="project" value="UniProtKB-SubCell"/>
</dbReference>
<dbReference type="GO" id="GO:0045275">
    <property type="term" value="C:respiratory chain complex III"/>
    <property type="evidence" value="ECO:0007669"/>
    <property type="project" value="InterPro"/>
</dbReference>
<dbReference type="GO" id="GO:0046872">
    <property type="term" value="F:metal ion binding"/>
    <property type="evidence" value="ECO:0007669"/>
    <property type="project" value="UniProtKB-KW"/>
</dbReference>
<dbReference type="GO" id="GO:0008121">
    <property type="term" value="F:ubiquinol-cytochrome-c reductase activity"/>
    <property type="evidence" value="ECO:0007669"/>
    <property type="project" value="InterPro"/>
</dbReference>
<dbReference type="GO" id="GO:0006122">
    <property type="term" value="P:mitochondrial electron transport, ubiquinol to cytochrome c"/>
    <property type="evidence" value="ECO:0007669"/>
    <property type="project" value="TreeGrafter"/>
</dbReference>
<dbReference type="CDD" id="cd00290">
    <property type="entry name" value="cytochrome_b_C"/>
    <property type="match status" value="1"/>
</dbReference>
<dbReference type="CDD" id="cd00284">
    <property type="entry name" value="Cytochrome_b_N"/>
    <property type="match status" value="1"/>
</dbReference>
<dbReference type="FunFam" id="1.20.810.10:FF:000002">
    <property type="entry name" value="Cytochrome b"/>
    <property type="match status" value="1"/>
</dbReference>
<dbReference type="Gene3D" id="1.20.810.10">
    <property type="entry name" value="Cytochrome Bc1 Complex, Chain C"/>
    <property type="match status" value="1"/>
</dbReference>
<dbReference type="InterPro" id="IPR005798">
    <property type="entry name" value="Cyt_b/b6_C"/>
</dbReference>
<dbReference type="InterPro" id="IPR036150">
    <property type="entry name" value="Cyt_b/b6_C_sf"/>
</dbReference>
<dbReference type="InterPro" id="IPR005797">
    <property type="entry name" value="Cyt_b/b6_N"/>
</dbReference>
<dbReference type="InterPro" id="IPR027387">
    <property type="entry name" value="Cytb/b6-like_sf"/>
</dbReference>
<dbReference type="InterPro" id="IPR030689">
    <property type="entry name" value="Cytochrome_b"/>
</dbReference>
<dbReference type="InterPro" id="IPR048260">
    <property type="entry name" value="Cytochrome_b_C_euk/bac"/>
</dbReference>
<dbReference type="InterPro" id="IPR048259">
    <property type="entry name" value="Cytochrome_b_N_euk/bac"/>
</dbReference>
<dbReference type="InterPro" id="IPR016174">
    <property type="entry name" value="Di-haem_cyt_TM"/>
</dbReference>
<dbReference type="PANTHER" id="PTHR19271">
    <property type="entry name" value="CYTOCHROME B"/>
    <property type="match status" value="1"/>
</dbReference>
<dbReference type="PANTHER" id="PTHR19271:SF16">
    <property type="entry name" value="CYTOCHROME B"/>
    <property type="match status" value="1"/>
</dbReference>
<dbReference type="Pfam" id="PF00032">
    <property type="entry name" value="Cytochrom_B_C"/>
    <property type="match status" value="1"/>
</dbReference>
<dbReference type="Pfam" id="PF00033">
    <property type="entry name" value="Cytochrome_B"/>
    <property type="match status" value="1"/>
</dbReference>
<dbReference type="PIRSF" id="PIRSF038885">
    <property type="entry name" value="COB"/>
    <property type="match status" value="1"/>
</dbReference>
<dbReference type="SUPFAM" id="SSF81648">
    <property type="entry name" value="a domain/subunit of cytochrome bc1 complex (Ubiquinol-cytochrome c reductase)"/>
    <property type="match status" value="1"/>
</dbReference>
<dbReference type="SUPFAM" id="SSF81342">
    <property type="entry name" value="Transmembrane di-heme cytochromes"/>
    <property type="match status" value="1"/>
</dbReference>
<dbReference type="PROSITE" id="PS51003">
    <property type="entry name" value="CYTB_CTER"/>
    <property type="match status" value="1"/>
</dbReference>
<dbReference type="PROSITE" id="PS51002">
    <property type="entry name" value="CYTB_NTER"/>
    <property type="match status" value="1"/>
</dbReference>
<name>CYB_STECL</name>
<organism>
    <name type="scientific">Stenella clymene</name>
    <name type="common">Clymene dolphin</name>
    <name type="synonym">Delphinus clymene</name>
    <dbReference type="NCBI Taxonomy" id="103589"/>
    <lineage>
        <taxon>Eukaryota</taxon>
        <taxon>Metazoa</taxon>
        <taxon>Chordata</taxon>
        <taxon>Craniata</taxon>
        <taxon>Vertebrata</taxon>
        <taxon>Euteleostomi</taxon>
        <taxon>Mammalia</taxon>
        <taxon>Eutheria</taxon>
        <taxon>Laurasiatheria</taxon>
        <taxon>Artiodactyla</taxon>
        <taxon>Whippomorpha</taxon>
        <taxon>Cetacea</taxon>
        <taxon>Odontoceti</taxon>
        <taxon>Delphinidae</taxon>
        <taxon>Stenella</taxon>
    </lineage>
</organism>
<protein>
    <recommendedName>
        <fullName>Cytochrome b</fullName>
    </recommendedName>
    <alternativeName>
        <fullName>Complex III subunit 3</fullName>
    </alternativeName>
    <alternativeName>
        <fullName>Complex III subunit III</fullName>
    </alternativeName>
    <alternativeName>
        <fullName>Cytochrome b-c1 complex subunit 3</fullName>
    </alternativeName>
    <alternativeName>
        <fullName>Ubiquinol-cytochrome-c reductase complex cytochrome b subunit</fullName>
    </alternativeName>
</protein>
<sequence>MTNIRKTHPLMKILNDAFIDLPTPSNISSWWNFGSLLGLCLIMQILTGLFLAMHYTPDTSTAFSSVAHICRDVNYGWFIRYLHANGASMFFICLYAHIGRGLYYGSYMFQETWNIGVLLLLTVMATAFVGYVLPWGQMSFWGATVITNLLSAIPYIGTTLVEWIWGGFSVDKATLTRFFAFHFILPFIITALAAVHLLFLHETGSNNPTGIPSNMDMIPFHPYYTIKDILGALLLILTLLALTLFTPDLLGDPDNYTPANPLSTPAHIKPEWYFLFAYAILRSIPNKLGGVLALLLSILVLIFIPMLQTSKQRSMMFRPFSQLLFWTLIADLLTLTWIGGQPVEHPYIIVGQLASILYFLLILVLMPTAGLIENKLLKW</sequence>
<feature type="chain" id="PRO_0000061613" description="Cytochrome b">
    <location>
        <begin position="1"/>
        <end position="379"/>
    </location>
</feature>
<feature type="transmembrane region" description="Helical" evidence="2">
    <location>
        <begin position="33"/>
        <end position="53"/>
    </location>
</feature>
<feature type="transmembrane region" description="Helical" evidence="2">
    <location>
        <begin position="77"/>
        <end position="98"/>
    </location>
</feature>
<feature type="transmembrane region" description="Helical" evidence="2">
    <location>
        <begin position="113"/>
        <end position="133"/>
    </location>
</feature>
<feature type="transmembrane region" description="Helical" evidence="2">
    <location>
        <begin position="178"/>
        <end position="198"/>
    </location>
</feature>
<feature type="transmembrane region" description="Helical" evidence="2">
    <location>
        <begin position="226"/>
        <end position="246"/>
    </location>
</feature>
<feature type="transmembrane region" description="Helical" evidence="2">
    <location>
        <begin position="288"/>
        <end position="308"/>
    </location>
</feature>
<feature type="transmembrane region" description="Helical" evidence="2">
    <location>
        <begin position="320"/>
        <end position="340"/>
    </location>
</feature>
<feature type="transmembrane region" description="Helical" evidence="2">
    <location>
        <begin position="347"/>
        <end position="367"/>
    </location>
</feature>
<feature type="binding site" description="axial binding residue" evidence="2">
    <location>
        <position position="83"/>
    </location>
    <ligand>
        <name>heme b</name>
        <dbReference type="ChEBI" id="CHEBI:60344"/>
        <label>b562</label>
    </ligand>
    <ligandPart>
        <name>Fe</name>
        <dbReference type="ChEBI" id="CHEBI:18248"/>
    </ligandPart>
</feature>
<feature type="binding site" description="axial binding residue" evidence="2">
    <location>
        <position position="97"/>
    </location>
    <ligand>
        <name>heme b</name>
        <dbReference type="ChEBI" id="CHEBI:60344"/>
        <label>b566</label>
    </ligand>
    <ligandPart>
        <name>Fe</name>
        <dbReference type="ChEBI" id="CHEBI:18248"/>
    </ligandPart>
</feature>
<feature type="binding site" description="axial binding residue" evidence="2">
    <location>
        <position position="182"/>
    </location>
    <ligand>
        <name>heme b</name>
        <dbReference type="ChEBI" id="CHEBI:60344"/>
        <label>b562</label>
    </ligand>
    <ligandPart>
        <name>Fe</name>
        <dbReference type="ChEBI" id="CHEBI:18248"/>
    </ligandPart>
</feature>
<feature type="binding site" description="axial binding residue" evidence="2">
    <location>
        <position position="196"/>
    </location>
    <ligand>
        <name>heme b</name>
        <dbReference type="ChEBI" id="CHEBI:60344"/>
        <label>b566</label>
    </ligand>
    <ligandPart>
        <name>Fe</name>
        <dbReference type="ChEBI" id="CHEBI:18248"/>
    </ligandPart>
</feature>
<feature type="binding site" evidence="2">
    <location>
        <position position="201"/>
    </location>
    <ligand>
        <name>a ubiquinone</name>
        <dbReference type="ChEBI" id="CHEBI:16389"/>
    </ligand>
</feature>
<keyword id="KW-0249">Electron transport</keyword>
<keyword id="KW-0349">Heme</keyword>
<keyword id="KW-0408">Iron</keyword>
<keyword id="KW-0472">Membrane</keyword>
<keyword id="KW-0479">Metal-binding</keyword>
<keyword id="KW-0496">Mitochondrion</keyword>
<keyword id="KW-0999">Mitochondrion inner membrane</keyword>
<keyword id="KW-0679">Respiratory chain</keyword>
<keyword id="KW-0812">Transmembrane</keyword>
<keyword id="KW-1133">Transmembrane helix</keyword>
<keyword id="KW-0813">Transport</keyword>
<keyword id="KW-0830">Ubiquinone</keyword>
<gene>
    <name type="primary">MT-CYB</name>
    <name type="synonym">COB</name>
    <name type="synonym">CYTB</name>
    <name type="synonym">MTCYB</name>
</gene>
<geneLocation type="mitochondrion"/>